<organism>
    <name type="scientific">Actinidia deliciosa</name>
    <name type="common">Kiwi</name>
    <dbReference type="NCBI Taxonomy" id="3627"/>
    <lineage>
        <taxon>Eukaryota</taxon>
        <taxon>Viridiplantae</taxon>
        <taxon>Streptophyta</taxon>
        <taxon>Embryophyta</taxon>
        <taxon>Tracheophyta</taxon>
        <taxon>Spermatophyta</taxon>
        <taxon>Magnoliopsida</taxon>
        <taxon>eudicotyledons</taxon>
        <taxon>Gunneridae</taxon>
        <taxon>Pentapetalae</taxon>
        <taxon>asterids</taxon>
        <taxon>Ericales</taxon>
        <taxon>Actinidiaceae</taxon>
        <taxon>Actinidia</taxon>
    </lineage>
</organism>
<evidence type="ECO:0000250" key="1">
    <source>
        <dbReference type="UniProtKB" id="A0A068BIF1"/>
    </source>
</evidence>
<evidence type="ECO:0000250" key="2">
    <source>
        <dbReference type="UniProtKB" id="Q9FI78"/>
    </source>
</evidence>
<evidence type="ECO:0000269" key="3">
    <source>
    </source>
</evidence>
<evidence type="ECO:0000303" key="4">
    <source>
    </source>
</evidence>
<evidence type="ECO:0000305" key="5"/>
<reference key="1">
    <citation type="submission" date="2010-10" db="EMBL/GenBank/DDBJ databases">
        <title>Plant and food research apple EST project.</title>
        <authorList>
            <person name="Beuning L."/>
            <person name="Bowen J."/>
            <person name="Crowhurst R."/>
            <person name="Gleave A."/>
            <person name="Janssen B."/>
            <person name="McArtney S."/>
            <person name="Newcomb R."/>
            <person name="Ross G."/>
            <person name="Snowden K."/>
            <person name="Walton E."/>
            <person name="Yauk Y."/>
        </authorList>
    </citation>
    <scope>NUCLEOTIDE SEQUENCE [MRNA]</scope>
    <source>
        <tissue>Petal</tissue>
    </source>
</reference>
<reference key="2">
    <citation type="journal article" date="2011" name="Phytochemistry">
        <title>Characterisation of two alcohol acyltransferases from kiwifruit (Actinidia spp.) reveals distinct substrate preferences.</title>
        <authorList>
            <person name="Guenther C.S."/>
            <person name="Chervin C."/>
            <person name="Marsh K.B."/>
            <person name="Newcomb R.D."/>
            <person name="Souleyre E.J.F."/>
        </authorList>
    </citation>
    <scope>TISSUE SPECIFICITY</scope>
    <scope>DEVELOPMENTAL STAGE</scope>
    <scope>INDUCTION BY ETHYLENE</scope>
</reference>
<keyword id="KW-0012">Acyltransferase</keyword>
<keyword id="KW-0808">Transferase</keyword>
<protein>
    <recommendedName>
        <fullName evidence="4">Alcohol acyltransferase 17</fullName>
        <shortName evidence="4">AdAT17</shortName>
        <ecNumber evidence="1">2.3.1.-</ecNumber>
    </recommendedName>
</protein>
<feature type="chain" id="PRO_0000451706" description="Alcohol acyltransferase 17">
    <location>
        <begin position="1"/>
        <end position="456"/>
    </location>
</feature>
<feature type="active site" description="Proton acceptor" evidence="2">
    <location>
        <position position="166"/>
    </location>
</feature>
<feature type="active site" description="Proton acceptor" evidence="2">
    <location>
        <position position="382"/>
    </location>
</feature>
<comment type="function">
    <text evidence="1">Involved in the biosynthesis of volatile esters which confer kiwifruit flavor (By similarity). Alcohol acyl transferase that can use a wide range of alcohols as substrate to produce esters (By similarity).</text>
</comment>
<comment type="tissue specificity">
    <text evidence="3">Expressed in fruit.</text>
</comment>
<comment type="developmental stage">
    <text evidence="3">Accumulates in kiwifruit during ripening.</text>
</comment>
<comment type="induction">
    <text evidence="3">Induced by ethylene in ripe fruits.</text>
</comment>
<comment type="similarity">
    <text evidence="5">Belongs to the plant acyltransferase family.</text>
</comment>
<dbReference type="EC" id="2.3.1.-" evidence="1"/>
<dbReference type="EMBL" id="HO772638">
    <property type="status" value="NOT_ANNOTATED_CDS"/>
    <property type="molecule type" value="mRNA"/>
</dbReference>
<dbReference type="SMR" id="P0DO26"/>
<dbReference type="GO" id="GO:0016746">
    <property type="term" value="F:acyltransferase activity"/>
    <property type="evidence" value="ECO:0000250"/>
    <property type="project" value="UniProtKB"/>
</dbReference>
<dbReference type="GO" id="GO:0006066">
    <property type="term" value="P:alcohol metabolic process"/>
    <property type="evidence" value="ECO:0000250"/>
    <property type="project" value="UniProtKB"/>
</dbReference>
<dbReference type="GO" id="GO:0009836">
    <property type="term" value="P:fruit ripening, climacteric"/>
    <property type="evidence" value="ECO:0000270"/>
    <property type="project" value="UniProtKB"/>
</dbReference>
<dbReference type="GO" id="GO:0009723">
    <property type="term" value="P:response to ethylene"/>
    <property type="evidence" value="ECO:0000270"/>
    <property type="project" value="UniProtKB"/>
</dbReference>
<dbReference type="Gene3D" id="3.30.559.10">
    <property type="entry name" value="Chloramphenicol acetyltransferase-like domain"/>
    <property type="match status" value="2"/>
</dbReference>
<dbReference type="InterPro" id="IPR023213">
    <property type="entry name" value="CAT-like_dom_sf"/>
</dbReference>
<dbReference type="InterPro" id="IPR050898">
    <property type="entry name" value="Plant_acyltransferase"/>
</dbReference>
<dbReference type="PANTHER" id="PTHR31147">
    <property type="entry name" value="ACYL TRANSFERASE 4"/>
    <property type="match status" value="1"/>
</dbReference>
<dbReference type="PANTHER" id="PTHR31147:SF66">
    <property type="entry name" value="OS05G0315700 PROTEIN"/>
    <property type="match status" value="1"/>
</dbReference>
<dbReference type="Pfam" id="PF02458">
    <property type="entry name" value="Transferase"/>
    <property type="match status" value="1"/>
</dbReference>
<accession>P0DO26</accession>
<name>AT17_ACTDE</name>
<gene>
    <name evidence="4" type="primary">AT17</name>
</gene>
<sequence>MASFPPSLVFTVRRKEPTLVLPSKPTPRELKQLSDIDDQEGFRFQVPVIMFYKRKLYMEGEDPVKVIREALAEALVFYYPFAGRLIEGPNRKLVVDCTSEGVLFIEADADIELNQLIGDTIDPGTYLDELLHDVPGSEGIVGCPLLLIQVTRFRCGGWAFAIRLNHTMSDTLGLVQFLTTIAEFTRGAEDAPSVPPVWQREFLAARQPPFIPFQHHEYEQVIDTIPDDNKKSMTHKSFFFGPKEIRAIRSHLPHHHRSTSSTFDVLTACLWRCRTCALGLDPQMTVRISCAANGRGKHGLHVPRGYYGNVSAFPATVLRAGIISTSPLEYAMEGVKKAKAIMTGEYLRSVADLMVTKGRPRYTVAGNYIVSDMTRVGLDTIDFGWGKPVYGGPARAFPLISFYGRFKDNKGEDGTVVLICLPEAALERFQEELKKMTGEHVDGPFDYKPIKVVSKL</sequence>
<proteinExistence type="evidence at transcript level"/>